<name>YQJC_BACSU</name>
<sequence>MNRLDHIGIAVFSIKDARSFYENVLGLAFLHQETVEEQKVNVAFFQAGSVKLELIEPLTADSPVHLFLEKKGQGLHHIAFLCNCLSEQLQALSDQHVQLIDRFPRQGANGKKIAFISPRETNGVLVELCEPKGDQHNEHE</sequence>
<reference key="1">
    <citation type="journal article" date="1996" name="Microbiology">
        <title>Systematic sequencing of the 283 kb 210 degrees-232 degrees region of the Bacillus subtilis genome containing the skin element and many sporulation genes.</title>
        <authorList>
            <person name="Mizuno M."/>
            <person name="Masuda S."/>
            <person name="Takemaru K."/>
            <person name="Hosono S."/>
            <person name="Sato T."/>
            <person name="Takeuchi M."/>
            <person name="Kobayashi Y."/>
        </authorList>
    </citation>
    <scope>NUCLEOTIDE SEQUENCE [GENOMIC DNA]</scope>
    <source>
        <strain>168 / JH642</strain>
    </source>
</reference>
<reference key="2">
    <citation type="journal article" date="1997" name="Nature">
        <title>The complete genome sequence of the Gram-positive bacterium Bacillus subtilis.</title>
        <authorList>
            <person name="Kunst F."/>
            <person name="Ogasawara N."/>
            <person name="Moszer I."/>
            <person name="Albertini A.M."/>
            <person name="Alloni G."/>
            <person name="Azevedo V."/>
            <person name="Bertero M.G."/>
            <person name="Bessieres P."/>
            <person name="Bolotin A."/>
            <person name="Borchert S."/>
            <person name="Borriss R."/>
            <person name="Boursier L."/>
            <person name="Brans A."/>
            <person name="Braun M."/>
            <person name="Brignell S.C."/>
            <person name="Bron S."/>
            <person name="Brouillet S."/>
            <person name="Bruschi C.V."/>
            <person name="Caldwell B."/>
            <person name="Capuano V."/>
            <person name="Carter N.M."/>
            <person name="Choi S.-K."/>
            <person name="Codani J.-J."/>
            <person name="Connerton I.F."/>
            <person name="Cummings N.J."/>
            <person name="Daniel R.A."/>
            <person name="Denizot F."/>
            <person name="Devine K.M."/>
            <person name="Duesterhoeft A."/>
            <person name="Ehrlich S.D."/>
            <person name="Emmerson P.T."/>
            <person name="Entian K.-D."/>
            <person name="Errington J."/>
            <person name="Fabret C."/>
            <person name="Ferrari E."/>
            <person name="Foulger D."/>
            <person name="Fritz C."/>
            <person name="Fujita M."/>
            <person name="Fujita Y."/>
            <person name="Fuma S."/>
            <person name="Galizzi A."/>
            <person name="Galleron N."/>
            <person name="Ghim S.-Y."/>
            <person name="Glaser P."/>
            <person name="Goffeau A."/>
            <person name="Golightly E.J."/>
            <person name="Grandi G."/>
            <person name="Guiseppi G."/>
            <person name="Guy B.J."/>
            <person name="Haga K."/>
            <person name="Haiech J."/>
            <person name="Harwood C.R."/>
            <person name="Henaut A."/>
            <person name="Hilbert H."/>
            <person name="Holsappel S."/>
            <person name="Hosono S."/>
            <person name="Hullo M.-F."/>
            <person name="Itaya M."/>
            <person name="Jones L.-M."/>
            <person name="Joris B."/>
            <person name="Karamata D."/>
            <person name="Kasahara Y."/>
            <person name="Klaerr-Blanchard M."/>
            <person name="Klein C."/>
            <person name="Kobayashi Y."/>
            <person name="Koetter P."/>
            <person name="Koningstein G."/>
            <person name="Krogh S."/>
            <person name="Kumano M."/>
            <person name="Kurita K."/>
            <person name="Lapidus A."/>
            <person name="Lardinois S."/>
            <person name="Lauber J."/>
            <person name="Lazarevic V."/>
            <person name="Lee S.-M."/>
            <person name="Levine A."/>
            <person name="Liu H."/>
            <person name="Masuda S."/>
            <person name="Mauel C."/>
            <person name="Medigue C."/>
            <person name="Medina N."/>
            <person name="Mellado R.P."/>
            <person name="Mizuno M."/>
            <person name="Moestl D."/>
            <person name="Nakai S."/>
            <person name="Noback M."/>
            <person name="Noone D."/>
            <person name="O'Reilly M."/>
            <person name="Ogawa K."/>
            <person name="Ogiwara A."/>
            <person name="Oudega B."/>
            <person name="Park S.-H."/>
            <person name="Parro V."/>
            <person name="Pohl T.M."/>
            <person name="Portetelle D."/>
            <person name="Porwollik S."/>
            <person name="Prescott A.M."/>
            <person name="Presecan E."/>
            <person name="Pujic P."/>
            <person name="Purnelle B."/>
            <person name="Rapoport G."/>
            <person name="Rey M."/>
            <person name="Reynolds S."/>
            <person name="Rieger M."/>
            <person name="Rivolta C."/>
            <person name="Rocha E."/>
            <person name="Roche B."/>
            <person name="Rose M."/>
            <person name="Sadaie Y."/>
            <person name="Sato T."/>
            <person name="Scanlan E."/>
            <person name="Schleich S."/>
            <person name="Schroeter R."/>
            <person name="Scoffone F."/>
            <person name="Sekiguchi J."/>
            <person name="Sekowska A."/>
            <person name="Seror S.J."/>
            <person name="Serror P."/>
            <person name="Shin B.-S."/>
            <person name="Soldo B."/>
            <person name="Sorokin A."/>
            <person name="Tacconi E."/>
            <person name="Takagi T."/>
            <person name="Takahashi H."/>
            <person name="Takemaru K."/>
            <person name="Takeuchi M."/>
            <person name="Tamakoshi A."/>
            <person name="Tanaka T."/>
            <person name="Terpstra P."/>
            <person name="Tognoni A."/>
            <person name="Tosato V."/>
            <person name="Uchiyama S."/>
            <person name="Vandenbol M."/>
            <person name="Vannier F."/>
            <person name="Vassarotti A."/>
            <person name="Viari A."/>
            <person name="Wambutt R."/>
            <person name="Wedler E."/>
            <person name="Wedler H."/>
            <person name="Weitzenegger T."/>
            <person name="Winters P."/>
            <person name="Wipat A."/>
            <person name="Yamamoto H."/>
            <person name="Yamane K."/>
            <person name="Yasumoto K."/>
            <person name="Yata K."/>
            <person name="Yoshida K."/>
            <person name="Yoshikawa H.-F."/>
            <person name="Zumstein E."/>
            <person name="Yoshikawa H."/>
            <person name="Danchin A."/>
        </authorList>
    </citation>
    <scope>NUCLEOTIDE SEQUENCE [LARGE SCALE GENOMIC DNA]</scope>
    <source>
        <strain>168</strain>
    </source>
</reference>
<reference key="3">
    <citation type="journal article" date="2009" name="Microbiology">
        <title>From a consortium sequence to a unified sequence: the Bacillus subtilis 168 reference genome a decade later.</title>
        <authorList>
            <person name="Barbe V."/>
            <person name="Cruveiller S."/>
            <person name="Kunst F."/>
            <person name="Lenoble P."/>
            <person name="Meurice G."/>
            <person name="Sekowska A."/>
            <person name="Vallenet D."/>
            <person name="Wang T."/>
            <person name="Moszer I."/>
            <person name="Medigue C."/>
            <person name="Danchin A."/>
        </authorList>
    </citation>
    <scope>SEQUENCE REVISION TO 13 AND 53</scope>
</reference>
<accession>P54540</accession>
<organism>
    <name type="scientific">Bacillus subtilis (strain 168)</name>
    <dbReference type="NCBI Taxonomy" id="224308"/>
    <lineage>
        <taxon>Bacteria</taxon>
        <taxon>Bacillati</taxon>
        <taxon>Bacillota</taxon>
        <taxon>Bacilli</taxon>
        <taxon>Bacillales</taxon>
        <taxon>Bacillaceae</taxon>
        <taxon>Bacillus</taxon>
    </lineage>
</organism>
<keyword id="KW-0456">Lyase</keyword>
<keyword id="KW-0479">Metal-binding</keyword>
<keyword id="KW-1185">Reference proteome</keyword>
<gene>
    <name type="primary">yqjC</name>
    <name type="ordered locus">BSU23930</name>
</gene>
<dbReference type="EMBL" id="D84432">
    <property type="protein sequence ID" value="BAA12609.1"/>
    <property type="molecule type" value="Genomic_DNA"/>
</dbReference>
<dbReference type="EMBL" id="AL009126">
    <property type="protein sequence ID" value="CAB14324.2"/>
    <property type="molecule type" value="Genomic_DNA"/>
</dbReference>
<dbReference type="PIR" id="C69963">
    <property type="entry name" value="C69963"/>
</dbReference>
<dbReference type="RefSeq" id="NP_390273.2">
    <property type="nucleotide sequence ID" value="NC_000964.3"/>
</dbReference>
<dbReference type="SMR" id="P54540"/>
<dbReference type="FunCoup" id="P54540">
    <property type="interactions" value="397"/>
</dbReference>
<dbReference type="STRING" id="224308.BSU23930"/>
<dbReference type="PaxDb" id="224308-BSU23930"/>
<dbReference type="EnsemblBacteria" id="CAB14324">
    <property type="protein sequence ID" value="CAB14324"/>
    <property type="gene ID" value="BSU_23930"/>
</dbReference>
<dbReference type="GeneID" id="938689"/>
<dbReference type="KEGG" id="bsu:BSU23930"/>
<dbReference type="PATRIC" id="fig|224308.179.peg.2606"/>
<dbReference type="eggNOG" id="COG0346">
    <property type="taxonomic scope" value="Bacteria"/>
</dbReference>
<dbReference type="InParanoid" id="P54540"/>
<dbReference type="OrthoDB" id="9788468at2"/>
<dbReference type="PhylomeDB" id="P54540"/>
<dbReference type="BioCyc" id="BSUB:BSU23930-MONOMER"/>
<dbReference type="Proteomes" id="UP000001570">
    <property type="component" value="Chromosome"/>
</dbReference>
<dbReference type="GO" id="GO:0004462">
    <property type="term" value="F:lactoylglutathione lyase activity"/>
    <property type="evidence" value="ECO:0007669"/>
    <property type="project" value="InterPro"/>
</dbReference>
<dbReference type="GO" id="GO:0046872">
    <property type="term" value="F:metal ion binding"/>
    <property type="evidence" value="ECO:0007669"/>
    <property type="project" value="UniProtKB-KW"/>
</dbReference>
<dbReference type="GO" id="GO:0004493">
    <property type="term" value="F:methylmalonyl-CoA epimerase activity"/>
    <property type="evidence" value="ECO:0000318"/>
    <property type="project" value="GO_Central"/>
</dbReference>
<dbReference type="GO" id="GO:0046491">
    <property type="term" value="P:L-methylmalonyl-CoA metabolic process"/>
    <property type="evidence" value="ECO:0000318"/>
    <property type="project" value="GO_Central"/>
</dbReference>
<dbReference type="CDD" id="cd07249">
    <property type="entry name" value="MMCE"/>
    <property type="match status" value="1"/>
</dbReference>
<dbReference type="Gene3D" id="3.10.180.10">
    <property type="entry name" value="2,3-Dihydroxybiphenyl 1,2-Dioxygenase, domain 1"/>
    <property type="match status" value="1"/>
</dbReference>
<dbReference type="InterPro" id="IPR029068">
    <property type="entry name" value="Glyas_Bleomycin-R_OHBP_Dase"/>
</dbReference>
<dbReference type="InterPro" id="IPR018146">
    <property type="entry name" value="Glyoxalase_1_CS"/>
</dbReference>
<dbReference type="InterPro" id="IPR017515">
    <property type="entry name" value="MeMalonyl-CoA_epimerase"/>
</dbReference>
<dbReference type="InterPro" id="IPR051785">
    <property type="entry name" value="MMCE/EMCE_epimerase"/>
</dbReference>
<dbReference type="InterPro" id="IPR037523">
    <property type="entry name" value="VOC"/>
</dbReference>
<dbReference type="NCBIfam" id="TIGR03081">
    <property type="entry name" value="metmalonyl_epim"/>
    <property type="match status" value="1"/>
</dbReference>
<dbReference type="PANTHER" id="PTHR43048">
    <property type="entry name" value="METHYLMALONYL-COA EPIMERASE"/>
    <property type="match status" value="1"/>
</dbReference>
<dbReference type="PANTHER" id="PTHR43048:SF3">
    <property type="entry name" value="METHYLMALONYL-COA EPIMERASE, MITOCHONDRIAL"/>
    <property type="match status" value="1"/>
</dbReference>
<dbReference type="Pfam" id="PF13669">
    <property type="entry name" value="Glyoxalase_4"/>
    <property type="match status" value="1"/>
</dbReference>
<dbReference type="SUPFAM" id="SSF54593">
    <property type="entry name" value="Glyoxalase/Bleomycin resistance protein/Dihydroxybiphenyl dioxygenase"/>
    <property type="match status" value="1"/>
</dbReference>
<dbReference type="PROSITE" id="PS00934">
    <property type="entry name" value="GLYOXALASE_I_1"/>
    <property type="match status" value="1"/>
</dbReference>
<dbReference type="PROSITE" id="PS00935">
    <property type="entry name" value="GLYOXALASE_I_2"/>
    <property type="match status" value="1"/>
</dbReference>
<dbReference type="PROSITE" id="PS51819">
    <property type="entry name" value="VOC"/>
    <property type="match status" value="1"/>
</dbReference>
<protein>
    <recommendedName>
        <fullName>Uncharacterized protein YqjC</fullName>
    </recommendedName>
</protein>
<proteinExistence type="inferred from homology"/>
<feature type="chain" id="PRO_0000168100" description="Uncharacterized protein YqjC">
    <location>
        <begin position="1"/>
        <end position="140"/>
    </location>
</feature>
<feature type="domain" description="VOC" evidence="1">
    <location>
        <begin position="3"/>
        <end position="131"/>
    </location>
</feature>
<feature type="binding site" evidence="1">
    <location>
        <position position="6"/>
    </location>
    <ligand>
        <name>a divalent metal cation</name>
        <dbReference type="ChEBI" id="CHEBI:60240"/>
    </ligand>
</feature>
<feature type="binding site" evidence="1">
    <location>
        <position position="53"/>
    </location>
    <ligand>
        <name>a divalent metal cation</name>
        <dbReference type="ChEBI" id="CHEBI:60240"/>
    </ligand>
</feature>
<feature type="binding site" evidence="1">
    <location>
        <position position="77"/>
    </location>
    <ligand>
        <name>a divalent metal cation</name>
        <dbReference type="ChEBI" id="CHEBI:60240"/>
    </ligand>
</feature>
<feature type="binding site" evidence="1">
    <location>
        <position position="127"/>
    </location>
    <ligand>
        <name>a divalent metal cation</name>
        <dbReference type="ChEBI" id="CHEBI:60240"/>
    </ligand>
</feature>
<feature type="sequence conflict" description="In Ref. 1; BAA12609." evidence="2" ref="1">
    <original>S</original>
    <variation>P</variation>
    <location>
        <position position="13"/>
    </location>
</feature>
<feature type="sequence conflict" description="In Ref. 1; BAA12609." evidence="2" ref="1">
    <original>E</original>
    <variation>G</variation>
    <location>
        <position position="53"/>
    </location>
</feature>
<comment type="similarity">
    <text evidence="2">Belongs to the methylmalonyl-CoA epimerase family.</text>
</comment>
<evidence type="ECO:0000255" key="1">
    <source>
        <dbReference type="PROSITE-ProRule" id="PRU01163"/>
    </source>
</evidence>
<evidence type="ECO:0000305" key="2"/>